<comment type="function">
    <text evidence="1">Probably deamidates glutamine residues to glutamate on methyl-accepting chemotaxis receptors (MCPs), playing an important role in chemotaxis.</text>
</comment>
<comment type="catalytic activity">
    <reaction evidence="1">
        <text>L-glutaminyl-[protein] + H2O = L-glutamyl-[protein] + NH4(+)</text>
        <dbReference type="Rhea" id="RHEA:16441"/>
        <dbReference type="Rhea" id="RHEA-COMP:10207"/>
        <dbReference type="Rhea" id="RHEA-COMP:10208"/>
        <dbReference type="ChEBI" id="CHEBI:15377"/>
        <dbReference type="ChEBI" id="CHEBI:28938"/>
        <dbReference type="ChEBI" id="CHEBI:29973"/>
        <dbReference type="ChEBI" id="CHEBI:30011"/>
        <dbReference type="EC" id="3.5.1.44"/>
    </reaction>
</comment>
<comment type="similarity">
    <text evidence="1">Belongs to the CheD family.</text>
</comment>
<sequence>MSAAPSELHEVFLNPGEFHFGESNTRISTLLGSCVSITLWHPRKRIGGMCHYMLTERKRPPNAALDGRFGSEAFELFLQHVAAAGTRPGEYQAKLFGGANMLTGPTGKQMDIGPRNVALGRQLLAANHIALMVEHVGGSGRRKLHFDVWSGDVWLAFPQGADAEIRNAHG</sequence>
<accession>Q47GX8</accession>
<proteinExistence type="inferred from homology"/>
<feature type="chain" id="PRO_0000251028" description="Probable chemoreceptor glutamine deamidase CheD 3">
    <location>
        <begin position="1"/>
        <end position="170"/>
    </location>
</feature>
<reference key="1">
    <citation type="journal article" date="2009" name="BMC Genomics">
        <title>Metabolic analysis of the soil microbe Dechloromonas aromatica str. RCB: indications of a surprisingly complex life-style and cryptic anaerobic pathways for aromatic degradation.</title>
        <authorList>
            <person name="Salinero K.K."/>
            <person name="Keller K."/>
            <person name="Feil W.S."/>
            <person name="Feil H."/>
            <person name="Trong S."/>
            <person name="Di Bartolo G."/>
            <person name="Lapidus A."/>
        </authorList>
    </citation>
    <scope>NUCLEOTIDE SEQUENCE [LARGE SCALE GENOMIC DNA]</scope>
    <source>
        <strain>RCB</strain>
    </source>
</reference>
<dbReference type="EC" id="3.5.1.44" evidence="1"/>
<dbReference type="EMBL" id="CP000089">
    <property type="protein sequence ID" value="AAZ45903.1"/>
    <property type="molecule type" value="Genomic_DNA"/>
</dbReference>
<dbReference type="SMR" id="Q47GX8"/>
<dbReference type="STRING" id="159087.Daro_1147"/>
<dbReference type="KEGG" id="dar:Daro_1147"/>
<dbReference type="eggNOG" id="COG1871">
    <property type="taxonomic scope" value="Bacteria"/>
</dbReference>
<dbReference type="HOGENOM" id="CLU_087854_1_1_4"/>
<dbReference type="OrthoDB" id="9807202at2"/>
<dbReference type="GO" id="GO:0050568">
    <property type="term" value="F:protein-glutamine glutaminase activity"/>
    <property type="evidence" value="ECO:0007669"/>
    <property type="project" value="UniProtKB-UniRule"/>
</dbReference>
<dbReference type="GO" id="GO:0006935">
    <property type="term" value="P:chemotaxis"/>
    <property type="evidence" value="ECO:0007669"/>
    <property type="project" value="UniProtKB-UniRule"/>
</dbReference>
<dbReference type="CDD" id="cd16352">
    <property type="entry name" value="CheD"/>
    <property type="match status" value="1"/>
</dbReference>
<dbReference type="Gene3D" id="3.30.1330.200">
    <property type="match status" value="1"/>
</dbReference>
<dbReference type="HAMAP" id="MF_01440">
    <property type="entry name" value="CheD"/>
    <property type="match status" value="1"/>
</dbReference>
<dbReference type="InterPro" id="IPR038592">
    <property type="entry name" value="CheD-like_sf"/>
</dbReference>
<dbReference type="InterPro" id="IPR005659">
    <property type="entry name" value="Chemorcpt_Glu_NH3ase_CheD"/>
</dbReference>
<dbReference type="InterPro" id="IPR011324">
    <property type="entry name" value="Cytotoxic_necrot_fac-like_cat"/>
</dbReference>
<dbReference type="PANTHER" id="PTHR35147:SF3">
    <property type="entry name" value="CHEMORECEPTOR GLUTAMINE DEAMIDASE CHED 1-RELATED"/>
    <property type="match status" value="1"/>
</dbReference>
<dbReference type="PANTHER" id="PTHR35147">
    <property type="entry name" value="CHEMORECEPTOR GLUTAMINE DEAMIDASE CHED-RELATED"/>
    <property type="match status" value="1"/>
</dbReference>
<dbReference type="Pfam" id="PF03975">
    <property type="entry name" value="CheD"/>
    <property type="match status" value="1"/>
</dbReference>
<dbReference type="SUPFAM" id="SSF64438">
    <property type="entry name" value="CNF1/YfiH-like putative cysteine hydrolases"/>
    <property type="match status" value="1"/>
</dbReference>
<protein>
    <recommendedName>
        <fullName evidence="1">Probable chemoreceptor glutamine deamidase CheD 3</fullName>
        <ecNumber evidence="1">3.5.1.44</ecNumber>
    </recommendedName>
</protein>
<gene>
    <name evidence="1" type="primary">cheD3</name>
    <name type="ordered locus">Daro_1147</name>
</gene>
<evidence type="ECO:0000255" key="1">
    <source>
        <dbReference type="HAMAP-Rule" id="MF_01440"/>
    </source>
</evidence>
<keyword id="KW-0145">Chemotaxis</keyword>
<keyword id="KW-0378">Hydrolase</keyword>
<organism>
    <name type="scientific">Dechloromonas aromatica (strain RCB)</name>
    <dbReference type="NCBI Taxonomy" id="159087"/>
    <lineage>
        <taxon>Bacteria</taxon>
        <taxon>Pseudomonadati</taxon>
        <taxon>Pseudomonadota</taxon>
        <taxon>Betaproteobacteria</taxon>
        <taxon>Rhodocyclales</taxon>
        <taxon>Azonexaceae</taxon>
        <taxon>Dechloromonas</taxon>
    </lineage>
</organism>
<name>CHED3_DECAR</name>